<gene>
    <name evidence="1" type="primary">sctB1</name>
    <name type="synonym">sipC</name>
    <name type="synonym">sspC</name>
    <name type="ordered locus">STY3007</name>
    <name type="ordered locus">t2786</name>
</gene>
<keyword id="KW-1043">Host membrane</keyword>
<keyword id="KW-0472">Membrane</keyword>
<keyword id="KW-0964">Secreted</keyword>
<keyword id="KW-0812">Transmembrane</keyword>
<keyword id="KW-1133">Transmembrane helix</keyword>
<keyword id="KW-0843">Virulence</keyword>
<comment type="function">
    <text evidence="1">Component of the type III secretion system 1 (SPI-1 T3SS), also called injectisome, which is used to inject bacterial effector proteins into eukaryotic host cells (By similarity). SipB/SctE1 and SipC/SctB1 are inserted into the host membrane where they form a pore and allow the translocation of effector proteins into the cytosol of target cells (By similarity).</text>
</comment>
<comment type="subunit">
    <text evidence="1">The core secretion machinery of the T3SS is composed of approximately 20 different proteins, including cytoplasmic components, a base, an export apparatus and a needle (By similarity). This subunit is involved in the formation of a pore, called the translocon, in host membrane (By similarity).</text>
</comment>
<comment type="subcellular location">
    <subcellularLocation>
        <location evidence="4">Secreted</location>
    </subcellularLocation>
    <subcellularLocation>
        <location evidence="1">Host membrane</location>
        <topology evidence="2">Single-pass membrane protein</topology>
    </subcellularLocation>
    <text evidence="1">Secreted via the type III secretion system 1 (SPI-1 T3SS).</text>
</comment>
<comment type="similarity">
    <text evidence="5">Belongs to the SctB/SipC family.</text>
</comment>
<reference key="1">
    <citation type="journal article" date="1995" name="Mol. Microbiol.">
        <title>Functional conservation of the Salmonella and Shigella effectors of entry into epithelial cells.</title>
        <authorList>
            <person name="Hermant D."/>
            <person name="Menard R."/>
            <person name="Arricau N."/>
            <person name="Parsot C."/>
            <person name="Popoff M.Y."/>
        </authorList>
    </citation>
    <scope>NUCLEOTIDE SEQUENCE [GENOMIC DNA]</scope>
    <source>
        <strain>ATCC 700931 / Ty2</strain>
    </source>
</reference>
<reference key="2">
    <citation type="journal article" date="2001" name="Nature">
        <title>Complete genome sequence of a multiple drug resistant Salmonella enterica serovar Typhi CT18.</title>
        <authorList>
            <person name="Parkhill J."/>
            <person name="Dougan G."/>
            <person name="James K.D."/>
            <person name="Thomson N.R."/>
            <person name="Pickard D."/>
            <person name="Wain J."/>
            <person name="Churcher C.M."/>
            <person name="Mungall K.L."/>
            <person name="Bentley S.D."/>
            <person name="Holden M.T.G."/>
            <person name="Sebaihia M."/>
            <person name="Baker S."/>
            <person name="Basham D."/>
            <person name="Brooks K."/>
            <person name="Chillingworth T."/>
            <person name="Connerton P."/>
            <person name="Cronin A."/>
            <person name="Davis P."/>
            <person name="Davies R.M."/>
            <person name="Dowd L."/>
            <person name="White N."/>
            <person name="Farrar J."/>
            <person name="Feltwell T."/>
            <person name="Hamlin N."/>
            <person name="Haque A."/>
            <person name="Hien T.T."/>
            <person name="Holroyd S."/>
            <person name="Jagels K."/>
            <person name="Krogh A."/>
            <person name="Larsen T.S."/>
            <person name="Leather S."/>
            <person name="Moule S."/>
            <person name="O'Gaora P."/>
            <person name="Parry C."/>
            <person name="Quail M.A."/>
            <person name="Rutherford K.M."/>
            <person name="Simmonds M."/>
            <person name="Skelton J."/>
            <person name="Stevens K."/>
            <person name="Whitehead S."/>
            <person name="Barrell B.G."/>
        </authorList>
    </citation>
    <scope>NUCLEOTIDE SEQUENCE [LARGE SCALE GENOMIC DNA]</scope>
    <source>
        <strain>CT18</strain>
    </source>
</reference>
<reference key="3">
    <citation type="journal article" date="2003" name="J. Bacteriol.">
        <title>Comparative genomics of Salmonella enterica serovar Typhi strains Ty2 and CT18.</title>
        <authorList>
            <person name="Deng W."/>
            <person name="Liou S.-R."/>
            <person name="Plunkett G. III"/>
            <person name="Mayhew G.F."/>
            <person name="Rose D.J."/>
            <person name="Burland V."/>
            <person name="Kodoyianni V."/>
            <person name="Schwartz D.C."/>
            <person name="Blattner F.R."/>
        </authorList>
    </citation>
    <scope>NUCLEOTIDE SEQUENCE [LARGE SCALE GENOMIC DNA]</scope>
    <source>
        <strain>ATCC 700931 / Ty2</strain>
    </source>
</reference>
<reference key="4">
    <citation type="journal article" date="2001" name="Microbiol. Immunol.">
        <title>Vi-Suppressed wild strain Salmonella typhi cultured in high osmolarity is hyperinvasive toward epithelial cells and destructive of Peyer's patches.</title>
        <authorList>
            <person name="Zhao L."/>
            <person name="Ezak T."/>
            <person name="Li Z.-Y."/>
            <person name="Kawamura Y."/>
            <person name="Hirose K."/>
            <person name="Watanabe H."/>
        </authorList>
    </citation>
    <scope>SUBCELLULAR LOCATION</scope>
    <source>
        <strain>GIFU 10007</strain>
    </source>
</reference>
<evidence type="ECO:0000250" key="1">
    <source>
        <dbReference type="UniProtKB" id="P0CL47"/>
    </source>
</evidence>
<evidence type="ECO:0000255" key="2"/>
<evidence type="ECO:0000256" key="3">
    <source>
        <dbReference type="SAM" id="MobiDB-lite"/>
    </source>
</evidence>
<evidence type="ECO:0000269" key="4">
    <source>
    </source>
</evidence>
<evidence type="ECO:0000305" key="5"/>
<protein>
    <recommendedName>
        <fullName evidence="5">SPI-1 type 3 secretion system translocon protein SctB</fullName>
        <shortName evidence="5">SPI-1 T3SS translocon protein SctB</shortName>
    </recommendedName>
    <alternativeName>
        <fullName>Cell invasion protein SipC</fullName>
    </alternativeName>
    <alternativeName>
        <fullName>Effector protein SipC</fullName>
    </alternativeName>
</protein>
<organism>
    <name type="scientific">Salmonella typhi</name>
    <dbReference type="NCBI Taxonomy" id="90370"/>
    <lineage>
        <taxon>Bacteria</taxon>
        <taxon>Pseudomonadati</taxon>
        <taxon>Pseudomonadota</taxon>
        <taxon>Gammaproteobacteria</taxon>
        <taxon>Enterobacterales</taxon>
        <taxon>Enterobacteriaceae</taxon>
        <taxon>Salmonella</taxon>
    </lineage>
</organism>
<accession>Q56135</accession>
<accession>Q7AME1</accession>
<accession>Q7C7N2</accession>
<dbReference type="EMBL" id="X82670">
    <property type="protein sequence ID" value="CAA57989.1"/>
    <property type="molecule type" value="Genomic_DNA"/>
</dbReference>
<dbReference type="EMBL" id="AE014613">
    <property type="protein sequence ID" value="AAO70347.1"/>
    <property type="molecule type" value="Genomic_DNA"/>
</dbReference>
<dbReference type="EMBL" id="AL513382">
    <property type="protein sequence ID" value="CAD05991.1"/>
    <property type="molecule type" value="Genomic_DNA"/>
</dbReference>
<dbReference type="PIR" id="S70215">
    <property type="entry name" value="S70215"/>
</dbReference>
<dbReference type="RefSeq" id="NP_457278.1">
    <property type="nucleotide sequence ID" value="NC_003198.1"/>
</dbReference>
<dbReference type="RefSeq" id="WP_000909023.1">
    <property type="nucleotide sequence ID" value="NZ_WSUR01000005.1"/>
</dbReference>
<dbReference type="STRING" id="220341.gene:17586901"/>
<dbReference type="KEGG" id="stt:t2786"/>
<dbReference type="KEGG" id="sty:STY3007"/>
<dbReference type="PATRIC" id="fig|220341.7.peg.3061"/>
<dbReference type="eggNOG" id="ENOG5032TZ4">
    <property type="taxonomic scope" value="Bacteria"/>
</dbReference>
<dbReference type="HOGENOM" id="CLU_055996_0_0_6"/>
<dbReference type="OMA" id="MEIQNTK"/>
<dbReference type="OrthoDB" id="6561758at2"/>
<dbReference type="Proteomes" id="UP000000541">
    <property type="component" value="Chromosome"/>
</dbReference>
<dbReference type="Proteomes" id="UP000002670">
    <property type="component" value="Chromosome"/>
</dbReference>
<dbReference type="GO" id="GO:0005576">
    <property type="term" value="C:extracellular region"/>
    <property type="evidence" value="ECO:0007669"/>
    <property type="project" value="UniProtKB-SubCell"/>
</dbReference>
<dbReference type="GO" id="GO:0033644">
    <property type="term" value="C:host cell membrane"/>
    <property type="evidence" value="ECO:0007669"/>
    <property type="project" value="UniProtKB-SubCell"/>
</dbReference>
<dbReference type="GO" id="GO:0016020">
    <property type="term" value="C:membrane"/>
    <property type="evidence" value="ECO:0007669"/>
    <property type="project" value="UniProtKB-KW"/>
</dbReference>
<dbReference type="GO" id="GO:1903829">
    <property type="term" value="P:positive regulation of protein localization"/>
    <property type="evidence" value="ECO:0000250"/>
    <property type="project" value="UniProtKB"/>
</dbReference>
<dbReference type="InterPro" id="IPR005427">
    <property type="entry name" value="BipC/SctB"/>
</dbReference>
<dbReference type="NCBIfam" id="TIGR02101">
    <property type="entry name" value="IpaC_SipC"/>
    <property type="match status" value="1"/>
</dbReference>
<dbReference type="NCBIfam" id="NF011900">
    <property type="entry name" value="PRK15373.1"/>
    <property type="match status" value="1"/>
</dbReference>
<dbReference type="NCBIfam" id="NF038055">
    <property type="entry name" value="T3SS_SctB_pilot"/>
    <property type="match status" value="1"/>
</dbReference>
<dbReference type="Pfam" id="PF09599">
    <property type="entry name" value="IpaC_SipC"/>
    <property type="match status" value="1"/>
</dbReference>
<dbReference type="PRINTS" id="PR01608">
    <property type="entry name" value="BACINVASINC"/>
</dbReference>
<name>SCTB1_SALTI</name>
<proteinExistence type="inferred from homology"/>
<feature type="chain" id="PRO_0000219859" description="SPI-1 type 3 secretion system translocon protein SctB">
    <location>
        <begin position="1"/>
        <end position="409"/>
    </location>
</feature>
<feature type="transmembrane region" description="Helical" evidence="2">
    <location>
        <begin position="119"/>
        <end position="140"/>
    </location>
</feature>
<feature type="region of interest" description="Disordered" evidence="3">
    <location>
        <begin position="350"/>
        <end position="378"/>
    </location>
</feature>
<feature type="compositionally biased region" description="Polar residues" evidence="3">
    <location>
        <begin position="350"/>
        <end position="368"/>
    </location>
</feature>
<sequence length="409" mass="43081">MLISNVGINPAAYLNNHSVENSSQTASQSVSAKDILNSIGISSSKVSDLGLSPTLSAPAPGVLTQTPGTITSFLKASIQNTDMNQDLNALANNVTTKANEVVQTQLREQQAEVGKFFDISGMSSSAVALLAAANTLMLTLNQADSKLSGKLSLVSFDAAKTTASSMMREGMNALSGSISQSALQLGITGVGAKLEYKGLQNERGALKHNAAKIDKLTTESHSIKNVLNGQNSVKLGAEGVDSLKSLNMKKTGTDATKNLNDATLKSNAGTSATESLGIKNSNKQISPEHQAILSKRLESVESDIRLEQNTMDMTRIDARKMQMTGDLIMKNSVTVGGIAGASRQYAATQERSEQQISQVNNRVASTASDEARESSRKSTSLIQEMLKTMESINQSKASALAAIAGNIRA</sequence>